<protein>
    <recommendedName>
        <fullName evidence="1">Small ribosomal subunit protein bS16</fullName>
    </recommendedName>
    <alternativeName>
        <fullName evidence="2">30S ribosomal protein S16</fullName>
    </alternativeName>
</protein>
<proteinExistence type="inferred from homology"/>
<accession>B7KIC5</accession>
<organism>
    <name type="scientific">Gloeothece citriformis (strain PCC 7424)</name>
    <name type="common">Cyanothece sp. (strain PCC 7424)</name>
    <dbReference type="NCBI Taxonomy" id="65393"/>
    <lineage>
        <taxon>Bacteria</taxon>
        <taxon>Bacillati</taxon>
        <taxon>Cyanobacteriota</taxon>
        <taxon>Cyanophyceae</taxon>
        <taxon>Oscillatoriophycideae</taxon>
        <taxon>Chroococcales</taxon>
        <taxon>Aphanothecaceae</taxon>
        <taxon>Gloeothece</taxon>
        <taxon>Gloeothece citriformis</taxon>
    </lineage>
</organism>
<name>RS16_GLOC7</name>
<dbReference type="EMBL" id="CP001291">
    <property type="protein sequence ID" value="ACK73612.1"/>
    <property type="molecule type" value="Genomic_DNA"/>
</dbReference>
<dbReference type="RefSeq" id="WP_015957190.1">
    <property type="nucleotide sequence ID" value="NC_011729.1"/>
</dbReference>
<dbReference type="SMR" id="B7KIC5"/>
<dbReference type="STRING" id="65393.PCC7424_5264"/>
<dbReference type="KEGG" id="cyc:PCC7424_5264"/>
<dbReference type="eggNOG" id="COG0228">
    <property type="taxonomic scope" value="Bacteria"/>
</dbReference>
<dbReference type="HOGENOM" id="CLU_100590_5_2_3"/>
<dbReference type="OrthoDB" id="9807878at2"/>
<dbReference type="Proteomes" id="UP000002384">
    <property type="component" value="Chromosome"/>
</dbReference>
<dbReference type="GO" id="GO:0005737">
    <property type="term" value="C:cytoplasm"/>
    <property type="evidence" value="ECO:0007669"/>
    <property type="project" value="UniProtKB-ARBA"/>
</dbReference>
<dbReference type="GO" id="GO:0015935">
    <property type="term" value="C:small ribosomal subunit"/>
    <property type="evidence" value="ECO:0007669"/>
    <property type="project" value="TreeGrafter"/>
</dbReference>
<dbReference type="GO" id="GO:0003735">
    <property type="term" value="F:structural constituent of ribosome"/>
    <property type="evidence" value="ECO:0007669"/>
    <property type="project" value="InterPro"/>
</dbReference>
<dbReference type="GO" id="GO:0006412">
    <property type="term" value="P:translation"/>
    <property type="evidence" value="ECO:0007669"/>
    <property type="project" value="UniProtKB-UniRule"/>
</dbReference>
<dbReference type="FunFam" id="3.30.1320.10:FF:000016">
    <property type="entry name" value="30S ribosomal protein S16"/>
    <property type="match status" value="1"/>
</dbReference>
<dbReference type="Gene3D" id="3.30.1320.10">
    <property type="match status" value="1"/>
</dbReference>
<dbReference type="HAMAP" id="MF_00385">
    <property type="entry name" value="Ribosomal_bS16"/>
    <property type="match status" value="1"/>
</dbReference>
<dbReference type="InterPro" id="IPR000307">
    <property type="entry name" value="Ribosomal_bS16"/>
</dbReference>
<dbReference type="InterPro" id="IPR020592">
    <property type="entry name" value="Ribosomal_bS16_CS"/>
</dbReference>
<dbReference type="InterPro" id="IPR023803">
    <property type="entry name" value="Ribosomal_bS16_dom_sf"/>
</dbReference>
<dbReference type="NCBIfam" id="TIGR00002">
    <property type="entry name" value="S16"/>
    <property type="match status" value="1"/>
</dbReference>
<dbReference type="PANTHER" id="PTHR12919">
    <property type="entry name" value="30S RIBOSOMAL PROTEIN S16"/>
    <property type="match status" value="1"/>
</dbReference>
<dbReference type="PANTHER" id="PTHR12919:SF20">
    <property type="entry name" value="SMALL RIBOSOMAL SUBUNIT PROTEIN BS16M"/>
    <property type="match status" value="1"/>
</dbReference>
<dbReference type="Pfam" id="PF00886">
    <property type="entry name" value="Ribosomal_S16"/>
    <property type="match status" value="1"/>
</dbReference>
<dbReference type="SUPFAM" id="SSF54565">
    <property type="entry name" value="Ribosomal protein S16"/>
    <property type="match status" value="1"/>
</dbReference>
<dbReference type="PROSITE" id="PS00732">
    <property type="entry name" value="RIBOSOMAL_S16"/>
    <property type="match status" value="1"/>
</dbReference>
<gene>
    <name evidence="1" type="primary">rpsP</name>
    <name evidence="1" type="synonym">rps16</name>
    <name type="ordered locus">PCC7424_5264</name>
</gene>
<keyword id="KW-1185">Reference proteome</keyword>
<keyword id="KW-0687">Ribonucleoprotein</keyword>
<keyword id="KW-0689">Ribosomal protein</keyword>
<comment type="similarity">
    <text evidence="1">Belongs to the bacterial ribosomal protein bS16 family.</text>
</comment>
<evidence type="ECO:0000255" key="1">
    <source>
        <dbReference type="HAMAP-Rule" id="MF_00385"/>
    </source>
</evidence>
<evidence type="ECO:0000305" key="2"/>
<feature type="chain" id="PRO_1000196380" description="Small ribosomal subunit protein bS16">
    <location>
        <begin position="1"/>
        <end position="82"/>
    </location>
</feature>
<sequence>MIKLRLKRYGKKREVSYRIVAMRSTSRRDGRPLEELGFYNPRTDETRLNVPAIVKRLQDGAQPTETVRNILQKAKVFEQVNA</sequence>
<reference key="1">
    <citation type="journal article" date="2011" name="MBio">
        <title>Novel metabolic attributes of the genus Cyanothece, comprising a group of unicellular nitrogen-fixing Cyanobacteria.</title>
        <authorList>
            <person name="Bandyopadhyay A."/>
            <person name="Elvitigala T."/>
            <person name="Welsh E."/>
            <person name="Stockel J."/>
            <person name="Liberton M."/>
            <person name="Min H."/>
            <person name="Sherman L.A."/>
            <person name="Pakrasi H.B."/>
        </authorList>
    </citation>
    <scope>NUCLEOTIDE SEQUENCE [LARGE SCALE GENOMIC DNA]</scope>
    <source>
        <strain>PCC 7424</strain>
    </source>
</reference>